<dbReference type="EC" id="2.1.1.-" evidence="5"/>
<dbReference type="EMBL" id="MW768702">
    <property type="protein sequence ID" value="QUF61543.1"/>
    <property type="molecule type" value="Genomic_DNA"/>
</dbReference>
<dbReference type="GO" id="GO:0008757">
    <property type="term" value="F:S-adenosylmethionine-dependent methyltransferase activity"/>
    <property type="evidence" value="ECO:0007669"/>
    <property type="project" value="InterPro"/>
</dbReference>
<dbReference type="GO" id="GO:0032259">
    <property type="term" value="P:methylation"/>
    <property type="evidence" value="ECO:0007669"/>
    <property type="project" value="UniProtKB-KW"/>
</dbReference>
<dbReference type="CDD" id="cd02440">
    <property type="entry name" value="AdoMet_MTases"/>
    <property type="match status" value="1"/>
</dbReference>
<dbReference type="Gene3D" id="3.40.50.150">
    <property type="entry name" value="Vaccinia Virus protein VP39"/>
    <property type="match status" value="1"/>
</dbReference>
<dbReference type="InterPro" id="IPR050447">
    <property type="entry name" value="Erg6_SMT_methyltransf"/>
</dbReference>
<dbReference type="InterPro" id="IPR020803">
    <property type="entry name" value="MeTfrase_dom"/>
</dbReference>
<dbReference type="InterPro" id="IPR013216">
    <property type="entry name" value="Methyltransf_11"/>
</dbReference>
<dbReference type="InterPro" id="IPR029063">
    <property type="entry name" value="SAM-dependent_MTases_sf"/>
</dbReference>
<dbReference type="PANTHER" id="PTHR44068:SF11">
    <property type="entry name" value="GERANYL DIPHOSPHATE 2-C-METHYLTRANSFERASE"/>
    <property type="match status" value="1"/>
</dbReference>
<dbReference type="PANTHER" id="PTHR44068">
    <property type="entry name" value="ZGC:194242"/>
    <property type="match status" value="1"/>
</dbReference>
<dbReference type="Pfam" id="PF08241">
    <property type="entry name" value="Methyltransf_11"/>
    <property type="match status" value="1"/>
</dbReference>
<dbReference type="SMART" id="SM00828">
    <property type="entry name" value="PKS_MT"/>
    <property type="match status" value="1"/>
</dbReference>
<dbReference type="SUPFAM" id="SSF53335">
    <property type="entry name" value="S-adenosyl-L-methionine-dependent methyltransferases"/>
    <property type="match status" value="1"/>
</dbReference>
<feature type="chain" id="PRO_0000461538" description="O-methyltransferase">
    <location>
        <begin position="1"/>
        <end position="267"/>
    </location>
</feature>
<feature type="binding site" evidence="1">
    <location>
        <position position="100"/>
    </location>
    <ligand>
        <name>S-adenosyl-L-methionine</name>
        <dbReference type="ChEBI" id="CHEBI:59789"/>
    </ligand>
</feature>
<feature type="binding site" evidence="1">
    <location>
        <position position="145"/>
    </location>
    <ligand>
        <name>S-adenosyl-L-methionine</name>
        <dbReference type="ChEBI" id="CHEBI:59789"/>
    </ligand>
</feature>
<comment type="function">
    <text evidence="2 4">O-methyltransferase; part of the gene cluster that mediates the biosynthesis of the tetrahydropyranyl antifungal agent lanomycin that acts as an inhibitor of CYP51 and blocks the ergosterol biosynthesis (PubMed:33857369). The biosynthesis probably begins with the formation of an hexaketide, followed by methionine mediated alkylation of C-2 and C-6, and methylation of the reduced C-3 oxygen, pyran forming reductive ring closure, oxygenation of C-4, beta-keto reduction, enoyl reduction and dehydration of the remaining oxygens, and finally, acylation with glycine to complete the biosynthesis (Probable).</text>
</comment>
<comment type="pathway">
    <text evidence="5">Antifungal biosynthesis.</text>
</comment>
<comment type="similarity">
    <text evidence="4">Belongs to the methyltransferase superfamily.</text>
</comment>
<evidence type="ECO:0000250" key="1">
    <source>
        <dbReference type="UniProtKB" id="Q8KZ94"/>
    </source>
</evidence>
<evidence type="ECO:0000269" key="2">
    <source>
    </source>
</evidence>
<evidence type="ECO:0000303" key="3">
    <source>
    </source>
</evidence>
<evidence type="ECO:0000305" key="4"/>
<evidence type="ECO:0000305" key="5">
    <source>
    </source>
</evidence>
<proteinExistence type="inferred from homology"/>
<sequence length="267" mass="29042">MSKIAQPTATDVGAMYDNHTDLMTDIMAGFIHVGYWEDPENPTETIELATERMTLEVLNRLRPSPGQHILDVGCGTGKTAASIATTHDVSITGITVSNHQIEVARKTYEALVETGKLNFQYADAMQLPLANASFDGAYAIESIVHMNDRRAALSNIARVLRPGSRLSIADLVLDDGCPDPDAIANWHELFQVPALISADKLKELLTETGFRVLECVDIRQHIRPICGVMDKKGLQVGGEVGKTLRGVAASLHGLEELGYILLVAERV</sequence>
<organism>
    <name type="scientific">Pyrenophora dematioidea</name>
    <name type="common">Helminthosporium dematioideum</name>
    <dbReference type="NCBI Taxonomy" id="139229"/>
    <lineage>
        <taxon>Eukaryota</taxon>
        <taxon>Fungi</taxon>
        <taxon>Dikarya</taxon>
        <taxon>Ascomycota</taxon>
        <taxon>Pezizomycotina</taxon>
        <taxon>Dothideomycetes</taxon>
        <taxon>Pleosporomycetidae</taxon>
        <taxon>Pleosporales</taxon>
        <taxon>Pleosporineae</taxon>
        <taxon>Pleosporaceae</taxon>
        <taxon>Pyrenophora</taxon>
    </lineage>
</organism>
<accession>P0DXV2</accession>
<reference key="1">
    <citation type="journal article" date="2021" name="J. Am. Chem. Soc.">
        <title>Targeted genome mining reveals the biosynthetic gene clusters of natural product CYP51 inhibitors.</title>
        <authorList>
            <person name="Liu N."/>
            <person name="Abramyan E.D."/>
            <person name="Cheng W."/>
            <person name="Perlatti B."/>
            <person name="Harvey C.J.B."/>
            <person name="Bills G.F."/>
            <person name="Tang Y."/>
        </authorList>
    </citation>
    <scope>NUCLEOTIDE SEQUENCE [GENOMIC DNA]</scope>
    <scope>FUNCTION</scope>
    <scope>PATHWAY</scope>
    <source>
        <strain>TTI-1096</strain>
    </source>
</reference>
<name>LAN3_PYRDE</name>
<gene>
    <name evidence="3" type="primary">ORF3</name>
</gene>
<protein>
    <recommendedName>
        <fullName evidence="3">O-methyltransferase</fullName>
        <ecNumber evidence="5">2.1.1.-</ecNumber>
    </recommendedName>
    <alternativeName>
        <fullName evidence="3">Lanomycin biosynthesis cluster protein 3</fullName>
    </alternativeName>
</protein>
<keyword id="KW-0489">Methyltransferase</keyword>
<keyword id="KW-0949">S-adenosyl-L-methionine</keyword>
<keyword id="KW-0808">Transferase</keyword>